<keyword id="KW-0002">3D-structure</keyword>
<keyword id="KW-0007">Acetylation</keyword>
<keyword id="KW-0025">Alternative splicing</keyword>
<keyword id="KW-0903">Direct protein sequencing</keyword>
<keyword id="KW-0225">Disease variant</keyword>
<keyword id="KW-0240">DNA-directed RNA polymerase</keyword>
<keyword id="KW-0539">Nucleus</keyword>
<keyword id="KW-1267">Proteomics identification</keyword>
<keyword id="KW-1185">Reference proteome</keyword>
<keyword id="KW-0804">Transcription</keyword>
<reference key="1">
    <citation type="submission" date="1998-07" db="EMBL/GenBank/DDBJ databases">
        <title>Human RNA polymerase I 16-kDa subunit.</title>
        <authorList>
            <person name="Ye M."/>
            <person name="Zhang Q."/>
            <person name="Fu G."/>
            <person name="Zhou J."/>
            <person name="Yu Y."/>
            <person name="Shen Y."/>
            <person name="Wu J."/>
            <person name="He K."/>
            <person name="Chen S."/>
            <person name="Mao M."/>
            <person name="Chen Z."/>
        </authorList>
    </citation>
    <scope>NUCLEOTIDE SEQUENCE [MRNA] (ISOFORM 1)</scope>
</reference>
<reference key="2">
    <citation type="journal article" date="2004" name="Nature">
        <title>The DNA sequence and analysis of human chromosome 13.</title>
        <authorList>
            <person name="Dunham A."/>
            <person name="Matthews L.H."/>
            <person name="Burton J."/>
            <person name="Ashurst J.L."/>
            <person name="Howe K.L."/>
            <person name="Ashcroft K.J."/>
            <person name="Beare D.M."/>
            <person name="Burford D.C."/>
            <person name="Hunt S.E."/>
            <person name="Griffiths-Jones S."/>
            <person name="Jones M.C."/>
            <person name="Keenan S.J."/>
            <person name="Oliver K."/>
            <person name="Scott C.E."/>
            <person name="Ainscough R."/>
            <person name="Almeida J.P."/>
            <person name="Ambrose K.D."/>
            <person name="Andrews D.T."/>
            <person name="Ashwell R.I.S."/>
            <person name="Babbage A.K."/>
            <person name="Bagguley C.L."/>
            <person name="Bailey J."/>
            <person name="Bannerjee R."/>
            <person name="Barlow K.F."/>
            <person name="Bates K."/>
            <person name="Beasley H."/>
            <person name="Bird C.P."/>
            <person name="Bray-Allen S."/>
            <person name="Brown A.J."/>
            <person name="Brown J.Y."/>
            <person name="Burrill W."/>
            <person name="Carder C."/>
            <person name="Carter N.P."/>
            <person name="Chapman J.C."/>
            <person name="Clamp M.E."/>
            <person name="Clark S.Y."/>
            <person name="Clarke G."/>
            <person name="Clee C.M."/>
            <person name="Clegg S.C."/>
            <person name="Cobley V."/>
            <person name="Collins J.E."/>
            <person name="Corby N."/>
            <person name="Coville G.J."/>
            <person name="Deloukas P."/>
            <person name="Dhami P."/>
            <person name="Dunham I."/>
            <person name="Dunn M."/>
            <person name="Earthrowl M.E."/>
            <person name="Ellington A.G."/>
            <person name="Faulkner L."/>
            <person name="Frankish A.G."/>
            <person name="Frankland J."/>
            <person name="French L."/>
            <person name="Garner P."/>
            <person name="Garnett J."/>
            <person name="Gilbert J.G.R."/>
            <person name="Gilson C.J."/>
            <person name="Ghori J."/>
            <person name="Grafham D.V."/>
            <person name="Gribble S.M."/>
            <person name="Griffiths C."/>
            <person name="Hall R.E."/>
            <person name="Hammond S."/>
            <person name="Harley J.L."/>
            <person name="Hart E.A."/>
            <person name="Heath P.D."/>
            <person name="Howden P.J."/>
            <person name="Huckle E.J."/>
            <person name="Hunt P.J."/>
            <person name="Hunt A.R."/>
            <person name="Johnson C."/>
            <person name="Johnson D."/>
            <person name="Kay M."/>
            <person name="Kimberley A.M."/>
            <person name="King A."/>
            <person name="Laird G.K."/>
            <person name="Langford C.J."/>
            <person name="Lawlor S."/>
            <person name="Leongamornlert D.A."/>
            <person name="Lloyd D.M."/>
            <person name="Lloyd C."/>
            <person name="Loveland J.E."/>
            <person name="Lovell J."/>
            <person name="Martin S."/>
            <person name="Mashreghi-Mohammadi M."/>
            <person name="McLaren S.J."/>
            <person name="McMurray A."/>
            <person name="Milne S."/>
            <person name="Moore M.J.F."/>
            <person name="Nickerson T."/>
            <person name="Palmer S.A."/>
            <person name="Pearce A.V."/>
            <person name="Peck A.I."/>
            <person name="Pelan S."/>
            <person name="Phillimore B."/>
            <person name="Porter K.M."/>
            <person name="Rice C.M."/>
            <person name="Searle S."/>
            <person name="Sehra H.K."/>
            <person name="Shownkeen R."/>
            <person name="Skuce C.D."/>
            <person name="Smith M."/>
            <person name="Steward C.A."/>
            <person name="Sycamore N."/>
            <person name="Tester J."/>
            <person name="Thomas D.W."/>
            <person name="Tracey A."/>
            <person name="Tromans A."/>
            <person name="Tubby B."/>
            <person name="Wall M."/>
            <person name="Wallis J.M."/>
            <person name="West A.P."/>
            <person name="Whitehead S.L."/>
            <person name="Willey D.L."/>
            <person name="Wilming L."/>
            <person name="Wray P.W."/>
            <person name="Wright M.W."/>
            <person name="Young L."/>
            <person name="Coulson A."/>
            <person name="Durbin R.M."/>
            <person name="Hubbard T."/>
            <person name="Sulston J.E."/>
            <person name="Beck S."/>
            <person name="Bentley D.R."/>
            <person name="Rogers J."/>
            <person name="Ross M.T."/>
        </authorList>
    </citation>
    <scope>NUCLEOTIDE SEQUENCE [LARGE SCALE GENOMIC DNA]</scope>
</reference>
<reference key="3">
    <citation type="journal article" date="2004" name="Genome Res.">
        <title>The status, quality, and expansion of the NIH full-length cDNA project: the Mammalian Gene Collection (MGC).</title>
        <authorList>
            <consortium name="The MGC Project Team"/>
        </authorList>
    </citation>
    <scope>NUCLEOTIDE SEQUENCE [LARGE SCALE MRNA] (ISOFORM 1)</scope>
    <source>
        <tissue>Cervix</tissue>
    </source>
</reference>
<reference key="4">
    <citation type="submission" date="2008-12" db="UniProtKB">
        <authorList>
            <person name="Bienvenut W.V."/>
            <person name="Lilla S."/>
            <person name="von Kriegsheim A."/>
            <person name="Lempens A."/>
            <person name="Kolch W."/>
        </authorList>
    </citation>
    <scope>PROTEIN SEQUENCE OF 1-9 AND 88-98</scope>
    <scope>ACETYLATION AT MET-1</scope>
    <scope>IDENTIFICATION BY MASS SPECTROMETRY</scope>
    <source>
        <tissue>Ovarian carcinoma</tissue>
    </source>
</reference>
<reference key="5">
    <citation type="journal article" date="2002" name="Mol. Cell. Biol.">
        <title>Characterization of human RNA polymerase III identifies orthologues for Saccharomyces cerevisiae RNA polymerase III subunits.</title>
        <authorList>
            <person name="Hu P."/>
            <person name="Wu S."/>
            <person name="Sun Y."/>
            <person name="Yuan C.-C."/>
            <person name="Kobayashi R."/>
            <person name="Myers M.P."/>
            <person name="Hernandez N."/>
        </authorList>
    </citation>
    <scope>IDENTIFICATION IN THE RNA POL III COMPLEX</scope>
    <scope>IDENTIFICATION BY MASS SPECTROMETRY</scope>
</reference>
<reference key="6">
    <citation type="journal article" date="2009" name="Anal. Chem.">
        <title>Lys-N and trypsin cover complementary parts of the phosphoproteome in a refined SCX-based approach.</title>
        <authorList>
            <person name="Gauci S."/>
            <person name="Helbig A.O."/>
            <person name="Slijper M."/>
            <person name="Krijgsveld J."/>
            <person name="Heck A.J."/>
            <person name="Mohammed S."/>
        </authorList>
    </citation>
    <scope>ACETYLATION [LARGE SCALE ANALYSIS] AT MET-1</scope>
    <scope>IDENTIFICATION BY MASS SPECTROMETRY [LARGE SCALE ANALYSIS]</scope>
</reference>
<reference key="7">
    <citation type="journal article" date="2010" name="Genome Res.">
        <title>Defining the RNA polymerase III transcriptome: Genome-wide localization of the RNA polymerase III transcription machinery in human cells.</title>
        <authorList>
            <person name="Canella D."/>
            <person name="Praz V."/>
            <person name="Reina J.H."/>
            <person name="Cousin P."/>
            <person name="Hernandez N."/>
        </authorList>
    </citation>
    <scope>FUNCTION OF POL III</scope>
</reference>
<reference key="8">
    <citation type="journal article" date="2011" name="BMC Syst. Biol.">
        <title>Initial characterization of the human central proteome.</title>
        <authorList>
            <person name="Burkard T.R."/>
            <person name="Planyavsky M."/>
            <person name="Kaupe I."/>
            <person name="Breitwieser F.P."/>
            <person name="Buerckstuemmer T."/>
            <person name="Bennett K.L."/>
            <person name="Superti-Furga G."/>
            <person name="Colinge J."/>
        </authorList>
    </citation>
    <scope>IDENTIFICATION BY MASS SPECTROMETRY [LARGE SCALE ANALYSIS]</scope>
</reference>
<reference key="9">
    <citation type="journal article" date="2012" name="Mol. Cell. Proteomics">
        <title>Comparative large-scale characterisation of plant vs. mammal proteins reveals similar and idiosyncratic N-alpha acetylation features.</title>
        <authorList>
            <person name="Bienvenut W.V."/>
            <person name="Sumpton D."/>
            <person name="Martinez A."/>
            <person name="Lilla S."/>
            <person name="Espagne C."/>
            <person name="Meinnel T."/>
            <person name="Giglione C."/>
        </authorList>
    </citation>
    <scope>ACETYLATION [LARGE SCALE ANALYSIS] AT MET-1</scope>
    <scope>IDENTIFICATION BY MASS SPECTROMETRY [LARGE SCALE ANALYSIS]</scope>
</reference>
<reference key="10">
    <citation type="journal article" date="2012" name="Proc. Natl. Acad. Sci. U.S.A.">
        <title>N-terminal acetylome analyses and functional insights of the N-terminal acetyltransferase NatB.</title>
        <authorList>
            <person name="Van Damme P."/>
            <person name="Lasa M."/>
            <person name="Polevoda B."/>
            <person name="Gazquez C."/>
            <person name="Elosegui-Artola A."/>
            <person name="Kim D.S."/>
            <person name="De Juan-Pardo E."/>
            <person name="Demeyer K."/>
            <person name="Hole K."/>
            <person name="Larrea E."/>
            <person name="Timmerman E."/>
            <person name="Prieto J."/>
            <person name="Arnesen T."/>
            <person name="Sherman F."/>
            <person name="Gevaert K."/>
            <person name="Aldabe R."/>
        </authorList>
    </citation>
    <scope>ACETYLATION [LARGE SCALE ANALYSIS] AT MET-1</scope>
    <scope>IDENTIFICATION BY MASS SPECTROMETRY [LARGE SCALE ANALYSIS]</scope>
</reference>
<reference key="11">
    <citation type="journal article" date="2022" name="Nat. Commun.">
        <title>A cancer-associated RNA polymerase III identity drives robust transcription and expression of snaR-A non-coding RNA.</title>
        <authorList>
            <person name="Van Bortle K."/>
            <person name="Marciano D.P."/>
            <person name="Liu Q."/>
            <person name="Chou T."/>
            <person name="Lipchik A.M."/>
            <person name="Gollapudi S."/>
            <person name="Geller B.S."/>
            <person name="Monte E."/>
            <person name="Kamakaka R.T."/>
            <person name="Snyder M.P."/>
        </authorList>
    </citation>
    <scope>FUNCTION OF POL III</scope>
    <scope>SUBUNIT</scope>
</reference>
<reference key="12">
    <citation type="journal article" date="2020" name="Nat. Commun.">
        <title>Structure of human RNA polymerase III.</title>
        <authorList>
            <person name="Ramsay E.P."/>
            <person name="Abascal-Palacios G."/>
            <person name="Daiss J.L."/>
            <person name="King H."/>
            <person name="Gouge J."/>
            <person name="Pilsl M."/>
            <person name="Beuron F."/>
            <person name="Morris E."/>
            <person name="Gunkel P."/>
            <person name="Engel C."/>
            <person name="Vannini A."/>
        </authorList>
    </citation>
    <scope>STRUCTURE BY ELECTRON MICROSCOPY (4.00 ANGSTROMS)</scope>
    <scope>SUBUNIT</scope>
    <scope>SUBCELLULAR LOCATION</scope>
</reference>
<reference key="13">
    <citation type="journal article" date="2021" name="Cell Res.">
        <title>Structure of human RNA polymerase III elongation complex.</title>
        <authorList>
            <person name="Li L."/>
            <person name="Yu Z."/>
            <person name="Zhao D."/>
            <person name="Ren Y."/>
            <person name="Hou H."/>
            <person name="Xu Y."/>
        </authorList>
    </citation>
    <scope>STRUCTURE BY ELECTRON MICROSCOPY (3.35 ANGSTROMS)</scope>
    <scope>SUBUNIT</scope>
</reference>
<reference key="14">
    <citation type="journal article" date="2021" name="Nat. Commun.">
        <title>Structural insights into RNA polymerase III-mediated transcription termination through trapping poly-deoxythymidine.</title>
        <authorList>
            <person name="Hou H."/>
            <person name="Li Y."/>
            <person name="Wang M."/>
            <person name="Liu A."/>
            <person name="Yu Z."/>
            <person name="Chen K."/>
            <person name="Zhao D."/>
            <person name="Xu Y."/>
        </authorList>
    </citation>
    <scope>STRUCTURE BY ELECTRON MICROSCOPY (3.60 ANGSTROMS)</scope>
    <scope>SUBUNIT</scope>
</reference>
<reference key="15">
    <citation type="journal article" date="2021" name="Nat. Struct. Mol. Biol.">
        <title>Cryo-EM structures of human RNA polymerase III in its unbound and transcribing states.</title>
        <authorList>
            <person name="Girbig M."/>
            <person name="Misiaszek A.D."/>
            <person name="Vorlander M.K."/>
            <person name="Lafita A."/>
            <person name="Grotsch H."/>
            <person name="Baudin F."/>
            <person name="Bateman A."/>
            <person name="Muller C.W."/>
        </authorList>
    </citation>
    <scope>STRUCTURE BY ELECTRON MICROSCOPY (2.80 ANGSTROMS)</scope>
    <scope>SUBUNIT</scope>
</reference>
<reference key="16">
    <citation type="journal article" date="2021" name="Nat. Struct. Mol. Biol.">
        <title>Structural insights into transcriptional regulation of human RNA polymerase III.</title>
        <authorList>
            <person name="Wang Q."/>
            <person name="Li S."/>
            <person name="Wan F."/>
            <person name="Xu Y."/>
            <person name="Wu Z."/>
            <person name="Cao M."/>
            <person name="Lan P."/>
            <person name="Lei M."/>
            <person name="Wu J."/>
        </authorList>
    </citation>
    <scope>STRUCTURE BY ELECTRON MICROSCOPY (2.90 ANGSTROMS)</scope>
    <scope>SUBUNIT</scope>
</reference>
<reference key="17">
    <citation type="journal article" date="2021" name="Cell Discov.">
        <title>Structure of the human RNA polymerase I elongation complex.</title>
        <authorList>
            <person name="Zhao D."/>
            <person name="Liu W."/>
            <person name="Chen K."/>
            <person name="Wu Z."/>
            <person name="Yang H."/>
            <person name="Xu Y."/>
        </authorList>
    </citation>
    <scope>STRUCTURE BY ELECTRON MICROSCOPY (2.81 ANGSTROMS)</scope>
    <scope>FUNCTION OF POL I</scope>
    <scope>SUBUNIT</scope>
</reference>
<reference key="18">
    <citation type="journal article" date="2021" name="Nat. Struct. Mol. Biol.">
        <title>Cryo-EM structures of human RNA polymerase I.</title>
        <authorList>
            <person name="Misiaszek A.D."/>
            <person name="Girbig M."/>
            <person name="Grotsch H."/>
            <person name="Baudin F."/>
            <person name="Murciano B."/>
            <person name="Lafita A."/>
            <person name="Muller C.W."/>
        </authorList>
    </citation>
    <scope>STRUCTURE BY ELECTRON MICROSCOPY (2.70 ANGSTROMS)</scope>
    <scope>FUNCTION OF POL I</scope>
    <scope>SUBUNIT</scope>
    <scope>SUBCELLULAR LOCATION</scope>
</reference>
<reference key="19">
    <citation type="journal article" date="2022" name="Life. Sci Alliance">
        <title>The human RNA polymerase I structure reveals an HMG-like docking domain specific to metazoans.</title>
        <authorList>
            <person name="Daiss J.L."/>
            <person name="Pilsl M."/>
            <person name="Straub K."/>
            <person name="Bleckmann A."/>
            <person name="Hocherl M."/>
            <person name="Heiss F.B."/>
            <person name="Abascal-Palacios G."/>
            <person name="Ramsay E.P."/>
            <person name="Tluckova K."/>
            <person name="Mars J.C."/>
            <person name="Furtges T."/>
            <person name="Bruckmann A."/>
            <person name="Rudack T."/>
            <person name="Bernecky C."/>
            <person name="Lamour V."/>
            <person name="Panov K."/>
            <person name="Vannini A."/>
            <person name="Moss T."/>
            <person name="Engel C."/>
        </authorList>
    </citation>
    <scope>STRUCTURE BY ELECTRON MICROSCOPY (4.09 ANGSTROMS)</scope>
    <scope>FUNCTION OF POL I</scope>
    <scope>SUBUNIT</scope>
</reference>
<reference key="20">
    <citation type="journal article" date="2011" name="Nat. Genet.">
        <title>Mutations in genes encoding subunits of RNA polymerases I and III cause Treacher Collins syndrome.</title>
        <authorList>
            <person name="Dauwerse J.G."/>
            <person name="Dixon J."/>
            <person name="Seland S."/>
            <person name="Ruivenkamp C.A."/>
            <person name="van Haeringen A."/>
            <person name="Hoefsloot L.H."/>
            <person name="Peters D.J."/>
            <person name="Boers A.C."/>
            <person name="Daumer-Haas C."/>
            <person name="Maiwald R."/>
            <person name="Zweier C."/>
            <person name="Kerr B."/>
            <person name="Cobo A.M."/>
            <person name="Toral J.F."/>
            <person name="Hoogeboom A.J."/>
            <person name="Lohmann D.R."/>
            <person name="Hehr U."/>
            <person name="Dixon M.J."/>
            <person name="Breuning M.H."/>
            <person name="Wieczorek D."/>
        </authorList>
    </citation>
    <scope>VARIANTS TCS2 LYS-47; ILE-50; ARG-51; GLU-52; CYS-56; SER-82 AND SER-99</scope>
</reference>
<dbReference type="EMBL" id="AF077044">
    <property type="protein sequence ID" value="AAD27777.1"/>
    <property type="molecule type" value="mRNA"/>
</dbReference>
<dbReference type="EMBL" id="AL136439">
    <property type="status" value="NOT_ANNOTATED_CDS"/>
    <property type="molecule type" value="Genomic_DNA"/>
</dbReference>
<dbReference type="EMBL" id="BC000889">
    <property type="protein sequence ID" value="AAH00889.1"/>
    <property type="molecule type" value="mRNA"/>
</dbReference>
<dbReference type="CCDS" id="CCDS9325.1"/>
<dbReference type="RefSeq" id="NP_001361336.1">
    <molecule id="P0DPB6-1"/>
    <property type="nucleotide sequence ID" value="NM_001374407.1"/>
</dbReference>
<dbReference type="RefSeq" id="NP_057056.1">
    <molecule id="P0DPB6-1"/>
    <property type="nucleotide sequence ID" value="NM_015972.4"/>
</dbReference>
<dbReference type="RefSeq" id="XP_005266469.1">
    <property type="nucleotide sequence ID" value="XM_005266412.1"/>
</dbReference>
<dbReference type="PDB" id="7A6H">
    <property type="method" value="EM"/>
    <property type="resolution" value="3.30 A"/>
    <property type="chains" value="K=1-133"/>
</dbReference>
<dbReference type="PDB" id="7AE1">
    <property type="method" value="EM"/>
    <property type="resolution" value="2.80 A"/>
    <property type="chains" value="K=1-133"/>
</dbReference>
<dbReference type="PDB" id="7AE3">
    <property type="method" value="EM"/>
    <property type="resolution" value="3.10 A"/>
    <property type="chains" value="K=1-133"/>
</dbReference>
<dbReference type="PDB" id="7AEA">
    <property type="method" value="EM"/>
    <property type="resolution" value="3.40 A"/>
    <property type="chains" value="K=1-133"/>
</dbReference>
<dbReference type="PDB" id="7AST">
    <property type="method" value="EM"/>
    <property type="resolution" value="4.00 A"/>
    <property type="chains" value="G=1-133"/>
</dbReference>
<dbReference type="PDB" id="7D58">
    <property type="method" value="EM"/>
    <property type="resolution" value="2.90 A"/>
    <property type="chains" value="K=1-133"/>
</dbReference>
<dbReference type="PDB" id="7D59">
    <property type="method" value="EM"/>
    <property type="resolution" value="3.10 A"/>
    <property type="chains" value="K=1-133"/>
</dbReference>
<dbReference type="PDB" id="7DN3">
    <property type="method" value="EM"/>
    <property type="resolution" value="3.50 A"/>
    <property type="chains" value="K=1-133"/>
</dbReference>
<dbReference type="PDB" id="7DU2">
    <property type="method" value="EM"/>
    <property type="resolution" value="3.35 A"/>
    <property type="chains" value="K=1-133"/>
</dbReference>
<dbReference type="PDB" id="7FJI">
    <property type="method" value="EM"/>
    <property type="resolution" value="3.60 A"/>
    <property type="chains" value="K=1-133"/>
</dbReference>
<dbReference type="PDB" id="7FJJ">
    <property type="method" value="EM"/>
    <property type="resolution" value="3.60 A"/>
    <property type="chains" value="K=1-133"/>
</dbReference>
<dbReference type="PDB" id="7OB9">
    <property type="method" value="EM"/>
    <property type="resolution" value="2.70 A"/>
    <property type="chains" value="K=1-133"/>
</dbReference>
<dbReference type="PDB" id="7OBA">
    <property type="method" value="EM"/>
    <property type="resolution" value="3.10 A"/>
    <property type="chains" value="K=1-133"/>
</dbReference>
<dbReference type="PDB" id="7OBB">
    <property type="method" value="EM"/>
    <property type="resolution" value="3.30 A"/>
    <property type="chains" value="K=1-133"/>
</dbReference>
<dbReference type="PDB" id="7VBA">
    <property type="method" value="EM"/>
    <property type="resolution" value="2.89 A"/>
    <property type="chains" value="K=1-133"/>
</dbReference>
<dbReference type="PDB" id="7VBB">
    <property type="method" value="EM"/>
    <property type="resolution" value="2.81 A"/>
    <property type="chains" value="K=1-133"/>
</dbReference>
<dbReference type="PDB" id="7VBC">
    <property type="method" value="EM"/>
    <property type="resolution" value="3.01 A"/>
    <property type="chains" value="K=1-133"/>
</dbReference>
<dbReference type="PDB" id="8A43">
    <property type="method" value="EM"/>
    <property type="resolution" value="4.09 A"/>
    <property type="chains" value="K=1-133"/>
</dbReference>
<dbReference type="PDB" id="8ITY">
    <property type="method" value="EM"/>
    <property type="resolution" value="3.90 A"/>
    <property type="chains" value="K=1-133"/>
</dbReference>
<dbReference type="PDB" id="8IUE">
    <property type="method" value="EM"/>
    <property type="resolution" value="4.10 A"/>
    <property type="chains" value="K=1-133"/>
</dbReference>
<dbReference type="PDB" id="8IUH">
    <property type="method" value="EM"/>
    <property type="resolution" value="3.40 A"/>
    <property type="chains" value="K=1-133"/>
</dbReference>
<dbReference type="PDB" id="9FSO">
    <property type="method" value="EM"/>
    <property type="resolution" value="3.28 A"/>
    <property type="chains" value="L=1-133"/>
</dbReference>
<dbReference type="PDB" id="9FSP">
    <property type="method" value="EM"/>
    <property type="resolution" value="3.39 A"/>
    <property type="chains" value="L=1-133"/>
</dbReference>
<dbReference type="PDB" id="9FSQ">
    <property type="method" value="EM"/>
    <property type="resolution" value="3.51 A"/>
    <property type="chains" value="L=1-133"/>
</dbReference>
<dbReference type="PDB" id="9FSR">
    <property type="method" value="EM"/>
    <property type="resolution" value="3.76 A"/>
    <property type="chains" value="L=1-133"/>
</dbReference>
<dbReference type="PDB" id="9FSS">
    <property type="method" value="EM"/>
    <property type="resolution" value="4.14 A"/>
    <property type="chains" value="L=1-133"/>
</dbReference>
<dbReference type="PDBsum" id="7A6H"/>
<dbReference type="PDBsum" id="7AE1"/>
<dbReference type="PDBsum" id="7AE3"/>
<dbReference type="PDBsum" id="7AEA"/>
<dbReference type="PDBsum" id="7AST"/>
<dbReference type="PDBsum" id="7D58"/>
<dbReference type="PDBsum" id="7D59"/>
<dbReference type="PDBsum" id="7DN3"/>
<dbReference type="PDBsum" id="7DU2"/>
<dbReference type="PDBsum" id="7FJI"/>
<dbReference type="PDBsum" id="7FJJ"/>
<dbReference type="PDBsum" id="7OB9"/>
<dbReference type="PDBsum" id="7OBA"/>
<dbReference type="PDBsum" id="7OBB"/>
<dbReference type="PDBsum" id="7VBA"/>
<dbReference type="PDBsum" id="7VBB"/>
<dbReference type="PDBsum" id="7VBC"/>
<dbReference type="PDBsum" id="8A43"/>
<dbReference type="PDBsum" id="8ITY"/>
<dbReference type="PDBsum" id="8IUE"/>
<dbReference type="PDBsum" id="8IUH"/>
<dbReference type="PDBsum" id="9FSO"/>
<dbReference type="PDBsum" id="9FSP"/>
<dbReference type="PDBsum" id="9FSQ"/>
<dbReference type="PDBsum" id="9FSR"/>
<dbReference type="PDBsum" id="9FSS"/>
<dbReference type="EMDB" id="EMD-11673"/>
<dbReference type="EMDB" id="EMD-11736"/>
<dbReference type="EMDB" id="EMD-11738"/>
<dbReference type="EMDB" id="EMD-11742"/>
<dbReference type="EMDB" id="EMD-11904"/>
<dbReference type="EMDB" id="EMD-12795"/>
<dbReference type="EMDB" id="EMD-12796"/>
<dbReference type="EMDB" id="EMD-12797"/>
<dbReference type="EMDB" id="EMD-15135"/>
<dbReference type="EMDB" id="EMD-30577"/>
<dbReference type="EMDB" id="EMD-30578"/>
<dbReference type="EMDB" id="EMD-30779"/>
<dbReference type="EMDB" id="EMD-30865"/>
<dbReference type="EMDB" id="EMD-31621"/>
<dbReference type="EMDB" id="EMD-31622"/>
<dbReference type="EMDB" id="EMD-31876"/>
<dbReference type="EMDB" id="EMD-31877"/>
<dbReference type="EMDB" id="EMD-31878"/>
<dbReference type="EMDB" id="EMD-35712"/>
<dbReference type="EMDB" id="EMD-35719"/>
<dbReference type="EMDB" id="EMD-35722"/>
<dbReference type="EMDB" id="EMD-50730"/>
<dbReference type="EMDB" id="EMD-50731"/>
<dbReference type="EMDB" id="EMD-50732"/>
<dbReference type="EMDB" id="EMD-50733"/>
<dbReference type="EMDB" id="EMD-50734"/>
<dbReference type="SMR" id="P0DPB6"/>
<dbReference type="ComplexPortal" id="CPX-2386">
    <property type="entry name" value="DNA-directed RNA polymerase I complex"/>
</dbReference>
<dbReference type="ComplexPortal" id="CPX-2393">
    <property type="entry name" value="DNA-directed RNA polymerase III complex, POLR3G variant"/>
</dbReference>
<dbReference type="ComplexPortal" id="CPX-7482">
    <property type="entry name" value="DNA-directed RNA polymerase III complex, POLR3GL variant"/>
</dbReference>
<dbReference type="CORUM" id="P0DPB6"/>
<dbReference type="FunCoup" id="P0DPB6">
    <property type="interactions" value="891"/>
</dbReference>
<dbReference type="IntAct" id="P0DPB6">
    <property type="interactions" value="103"/>
</dbReference>
<dbReference type="MINT" id="P0DPB6"/>
<dbReference type="STRING" id="9606.ENSP00000302478"/>
<dbReference type="GlyGen" id="P0DPB6">
    <property type="glycosylation" value="1 site, 1 O-linked glycan (1 site)"/>
</dbReference>
<dbReference type="iPTMnet" id="P0DPB6"/>
<dbReference type="MetOSite" id="P0DPB6"/>
<dbReference type="PhosphoSitePlus" id="P0DPB6"/>
<dbReference type="BioMuta" id="POLR1D"/>
<dbReference type="jPOST" id="P0DPB6"/>
<dbReference type="MassIVE" id="P0DPB6"/>
<dbReference type="PaxDb" id="9606-ENSP00000302478"/>
<dbReference type="PeptideAtlas" id="P0DPB6"/>
<dbReference type="Pumba" id="P0DPB6"/>
<dbReference type="Antibodypedia" id="22678">
    <property type="antibodies" value="112 antibodies from 24 providers"/>
</dbReference>
<dbReference type="DNASU" id="51082"/>
<dbReference type="Ensembl" id="ENST00000302979.5">
    <molecule id="P0DPB6-1"/>
    <property type="protein sequence ID" value="ENSP00000302478.4"/>
    <property type="gene ID" value="ENSG00000186184.20"/>
</dbReference>
<dbReference type="GeneID" id="51082"/>
<dbReference type="KEGG" id="hsa:51082"/>
<dbReference type="MANE-Select" id="ENST00000302979.5">
    <property type="protein sequence ID" value="ENSP00000302478.4"/>
    <property type="RefSeq nucleotide sequence ID" value="NM_015972.4"/>
    <property type="RefSeq protein sequence ID" value="NP_057056.1"/>
</dbReference>
<dbReference type="AGR" id="HGNC:20422"/>
<dbReference type="CTD" id="51082"/>
<dbReference type="DisGeNET" id="51082"/>
<dbReference type="GeneCards" id="POLR1D"/>
<dbReference type="GeneReviews" id="POLR1D"/>
<dbReference type="HGNC" id="HGNC:20422">
    <property type="gene designation" value="POLR1D"/>
</dbReference>
<dbReference type="HPA" id="ENSG00000186184">
    <property type="expression patterns" value="Low tissue specificity"/>
</dbReference>
<dbReference type="MalaCards" id="POLR1D"/>
<dbReference type="MIM" id="613715">
    <property type="type" value="gene"/>
</dbReference>
<dbReference type="MIM" id="613717">
    <property type="type" value="phenotype"/>
</dbReference>
<dbReference type="neXtProt" id="NX_P0DPB6"/>
<dbReference type="OpenTargets" id="ENSG00000186184"/>
<dbReference type="VEuPathDB" id="HostDB:ENSG00000186184"/>
<dbReference type="eggNOG" id="KOG3438">
    <property type="taxonomic scope" value="Eukaryota"/>
</dbReference>
<dbReference type="GeneTree" id="ENSGT00550000075160"/>
<dbReference type="InParanoid" id="P0DPB6"/>
<dbReference type="OMA" id="MRIQMYD"/>
<dbReference type="OrthoDB" id="510325at2759"/>
<dbReference type="PAN-GO" id="P0DPB6">
    <property type="GO annotations" value="3 GO annotations based on evolutionary models"/>
</dbReference>
<dbReference type="PathwayCommons" id="P0DPB6"/>
<dbReference type="SignaLink" id="P0DPB6"/>
<dbReference type="SIGNOR" id="P0DPB6"/>
<dbReference type="CD-CODE" id="91857CE7">
    <property type="entry name" value="Nucleolus"/>
</dbReference>
<dbReference type="ChiTaRS" id="POLR1D">
    <property type="organism name" value="human"/>
</dbReference>
<dbReference type="Pharos" id="P0DPB6">
    <property type="development level" value="Tbio"/>
</dbReference>
<dbReference type="Proteomes" id="UP000005640">
    <property type="component" value="Chromosome 13"/>
</dbReference>
<dbReference type="Bgee" id="ENSG00000186184">
    <property type="expression patterns" value="Expressed in body of pancreas and 207 other cell types or tissues"/>
</dbReference>
<dbReference type="ExpressionAtlas" id="P0DPB6">
    <property type="expression patterns" value="baseline and differential"/>
</dbReference>
<dbReference type="GO" id="GO:0005736">
    <property type="term" value="C:RNA polymerase I complex"/>
    <property type="evidence" value="ECO:0000314"/>
    <property type="project" value="UniProtKB"/>
</dbReference>
<dbReference type="GO" id="GO:0005666">
    <property type="term" value="C:RNA polymerase III complex"/>
    <property type="evidence" value="ECO:0000314"/>
    <property type="project" value="UniProtKB"/>
</dbReference>
<dbReference type="GO" id="GO:0003677">
    <property type="term" value="F:DNA binding"/>
    <property type="evidence" value="ECO:0007669"/>
    <property type="project" value="InterPro"/>
</dbReference>
<dbReference type="GO" id="GO:0003899">
    <property type="term" value="F:DNA-directed RNA polymerase activity"/>
    <property type="evidence" value="ECO:0007669"/>
    <property type="project" value="InterPro"/>
</dbReference>
<dbReference type="GO" id="GO:0046983">
    <property type="term" value="F:protein dimerization activity"/>
    <property type="evidence" value="ECO:0007669"/>
    <property type="project" value="InterPro"/>
</dbReference>
<dbReference type="GO" id="GO:0006383">
    <property type="term" value="P:transcription by RNA polymerase III"/>
    <property type="evidence" value="ECO:0000318"/>
    <property type="project" value="GO_Central"/>
</dbReference>
<dbReference type="GO" id="GO:0006362">
    <property type="term" value="P:transcription elongation by RNA polymerase I"/>
    <property type="evidence" value="ECO:0000318"/>
    <property type="project" value="GO_Central"/>
</dbReference>
<dbReference type="CDD" id="cd07029">
    <property type="entry name" value="RNAP_I_III_AC19"/>
    <property type="match status" value="1"/>
</dbReference>
<dbReference type="FunFam" id="3.30.1360.10:FF:000006">
    <property type="entry name" value="DNA-directed RNA polymerases I and III subunit RPAC2"/>
    <property type="match status" value="1"/>
</dbReference>
<dbReference type="Gene3D" id="3.30.1360.10">
    <property type="entry name" value="RNA polymerase, RBP11-like subunit"/>
    <property type="match status" value="1"/>
</dbReference>
<dbReference type="HAMAP" id="MF_00261">
    <property type="entry name" value="RNApol_arch_Rpo11"/>
    <property type="match status" value="1"/>
</dbReference>
<dbReference type="InterPro" id="IPR036603">
    <property type="entry name" value="RBP11-like"/>
</dbReference>
<dbReference type="InterPro" id="IPR009025">
    <property type="entry name" value="RBP11-like_dimer"/>
</dbReference>
<dbReference type="InterPro" id="IPR008193">
    <property type="entry name" value="RNA_pol_Rpb11_13-16kDa_CS"/>
</dbReference>
<dbReference type="InterPro" id="IPR033898">
    <property type="entry name" value="RNAP_AC19"/>
</dbReference>
<dbReference type="InterPro" id="IPR022905">
    <property type="entry name" value="Rpo11-like"/>
</dbReference>
<dbReference type="PANTHER" id="PTHR13946">
    <property type="entry name" value="DNA-DIRECTED RNA POLYMERASE I,II,III"/>
    <property type="match status" value="1"/>
</dbReference>
<dbReference type="PANTHER" id="PTHR13946:SF28">
    <property type="entry name" value="DNA-DIRECTED RNA POLYMERASES I AND III SUBUNIT RPAC2"/>
    <property type="match status" value="1"/>
</dbReference>
<dbReference type="Pfam" id="PF13656">
    <property type="entry name" value="RNA_pol_L_2"/>
    <property type="match status" value="1"/>
</dbReference>
<dbReference type="SUPFAM" id="SSF55257">
    <property type="entry name" value="RBP11-like subunits of RNA polymerase"/>
    <property type="match status" value="1"/>
</dbReference>
<dbReference type="PROSITE" id="PS01154">
    <property type="entry name" value="RNA_POL_L_13KD"/>
    <property type="match status" value="1"/>
</dbReference>
<evidence type="ECO:0000250" key="1">
    <source>
        <dbReference type="UniProtKB" id="P28000"/>
    </source>
</evidence>
<evidence type="ECO:0000269" key="2">
    <source>
    </source>
</evidence>
<evidence type="ECO:0000269" key="3">
    <source>
    </source>
</evidence>
<evidence type="ECO:0000269" key="4">
    <source>
    </source>
</evidence>
<evidence type="ECO:0000269" key="5">
    <source>
    </source>
</evidence>
<evidence type="ECO:0000269" key="6">
    <source>
    </source>
</evidence>
<evidence type="ECO:0000269" key="7">
    <source>
    </source>
</evidence>
<evidence type="ECO:0000269" key="8">
    <source>
    </source>
</evidence>
<evidence type="ECO:0000269" key="9">
    <source>
    </source>
</evidence>
<evidence type="ECO:0000269" key="10">
    <source>
    </source>
</evidence>
<evidence type="ECO:0000269" key="11">
    <source>
    </source>
</evidence>
<evidence type="ECO:0000269" key="12">
    <source>
    </source>
</evidence>
<evidence type="ECO:0000269" key="13">
    <source>
    </source>
</evidence>
<evidence type="ECO:0000269" key="14">
    <source ref="4"/>
</evidence>
<evidence type="ECO:0000305" key="15"/>
<evidence type="ECO:0000305" key="16">
    <source>
    </source>
</evidence>
<evidence type="ECO:0000312" key="17">
    <source>
        <dbReference type="HGNC" id="HGNC:20422"/>
    </source>
</evidence>
<evidence type="ECO:0007744" key="18">
    <source>
    </source>
</evidence>
<evidence type="ECO:0007744" key="19">
    <source>
    </source>
</evidence>
<evidence type="ECO:0007744" key="20">
    <source>
    </source>
</evidence>
<evidence type="ECO:0007829" key="21">
    <source>
        <dbReference type="PDB" id="7AE3"/>
    </source>
</evidence>
<evidence type="ECO:0007829" key="22">
    <source>
        <dbReference type="PDB" id="7OB9"/>
    </source>
</evidence>
<gene>
    <name evidence="17" type="primary">POLR1D</name>
</gene>
<name>RPAC2_HUMAN</name>
<sequence>MEEDQELERKISGLKTSMAEGERKTALEMVQAAGTDRHCVTFVLHEEDHTLGNSLRYMIMKNPEVEFCGYTTTHPSESKINLRIQTRGTLPAVEPFQRGLNELMNVCQHVLDKFEASIKDYKDQKASRNESTF</sequence>
<organism>
    <name type="scientific">Homo sapiens</name>
    <name type="common">Human</name>
    <dbReference type="NCBI Taxonomy" id="9606"/>
    <lineage>
        <taxon>Eukaryota</taxon>
        <taxon>Metazoa</taxon>
        <taxon>Chordata</taxon>
        <taxon>Craniata</taxon>
        <taxon>Vertebrata</taxon>
        <taxon>Euteleostomi</taxon>
        <taxon>Mammalia</taxon>
        <taxon>Eutheria</taxon>
        <taxon>Euarchontoglires</taxon>
        <taxon>Primates</taxon>
        <taxon>Haplorrhini</taxon>
        <taxon>Catarrhini</taxon>
        <taxon>Hominidae</taxon>
        <taxon>Homo</taxon>
    </lineage>
</organism>
<accession>P0DPB6</accession>
<accession>Q5TBX2</accession>
<accession>Q96BR3</accession>
<accession>Q9Y2S0</accession>
<protein>
    <recommendedName>
        <fullName>DNA-directed RNA polymerases I and III subunit RPAC2</fullName>
        <shortName>RNA polymerases I and III subunit AC2</shortName>
    </recommendedName>
    <alternativeName>
        <fullName>AC19</fullName>
    </alternativeName>
    <alternativeName>
        <fullName>DNA-directed RNA polymerase I subunit D</fullName>
    </alternativeName>
    <alternativeName>
        <fullName>RNA polymerase I 16 kDa subunit</fullName>
        <shortName>RPA16</shortName>
    </alternativeName>
    <alternativeName>
        <fullName>RPC16</fullName>
    </alternativeName>
    <alternativeName>
        <fullName>hRPA19</fullName>
    </alternativeName>
</protein>
<comment type="function">
    <text evidence="1 3 9 11 12 13">DNA-dependent RNA polymerase catalyzes the transcription of DNA into RNA using the four ribonucleoside triphosphates as substrates. Common component of RNA polymerases I and III which synthesize ribosomal RNA precursors and short non-coding RNAs including 5S rRNA, snRNAs, tRNAs and miRNAs, respectively.</text>
</comment>
<comment type="subunit">
    <text evidence="2 5 6 7 8 9 10 11 12 13">Component of the RNA polymerase I and RNA polymerase III complexes consisting of at least 13 and 17 subunits, respectively (PubMed:12391170, PubMed:33335104, PubMed:33558764, PubMed:33558766, PubMed:33674783, PubMed:34671025, PubMed:34675218, PubMed:34887565, PubMed:35637192). Pol I complex consists of a ten-subunit catalytic core composed of POLR1A/RPA1, POLR1B/RPA2, POLR1C/RPAC1, POLR1D/RPAC2, POLR1H/RPA12, POLR2E/RPABC1, POLR2F/RPABC2, POLR2H/RPABC3, POLR2K/RPABC4 and POLR2L/RPABC5; a mobile stalk subunit POLR1F/RPA43 protruding from the core and additional subunits homologous to general transcription factors POLR1E/RPA49 and POLR1G/RPA34. Part of Pol I pre-initiation complex (PIC), in which Pol I core assembles with RRN3 and promoter-bound UTBF and SL1/TIF-IB complex (PubMed:34671025, PubMed:34887565, PubMed:36271492). Pol III complex consists of a ten-subunit catalytic core composed of POLR3A/RPC1, POLR3B/RPC2, POLR1C/RPAC1, POLR1D/RPAC2, POLR3K/RPC10, POLR2E/RPABC1, POLR2F/RPABC2, POLR2H/RPABC3, POLR2K/RPABC4 and POLR2L/RPABC5; a mobile stalk composed of two subunits POLR3H/RPC8 and CRCP/RPC9, protruding from the core and functioning primarily in transcription initiation; and additional subunits homologous to general transcription factors of the RNA polymerase II machinery, POLR3C/RPC3-POLR3F/RPC6-POLR3G/RPC7 heterotrimer required for transcription initiation and POLR3D/RPC4-POLR3E/RPC5 heterodimer involved in both transcription initiation and termination.</text>
</comment>
<comment type="interaction">
    <interactant intactId="EBI-359498">
        <id>P0DPB6</id>
    </interactant>
    <interactant intactId="EBI-718729">
        <id>P55212</id>
        <label>CASP6</label>
    </interactant>
    <organismsDiffer>false</organismsDiffer>
    <experiments>3</experiments>
</comment>
<comment type="interaction">
    <interactant intactId="EBI-359498">
        <id>P0DPB6</id>
    </interactant>
    <interactant intactId="EBI-351506">
        <id>P06396</id>
        <label>GSN</label>
    </interactant>
    <organismsDiffer>false</organismsDiffer>
    <experiments>3</experiments>
</comment>
<comment type="interaction">
    <interactant intactId="EBI-359498">
        <id>P0DPB6</id>
    </interactant>
    <interactant intactId="EBI-21591415">
        <id>P13473-2</id>
        <label>LAMP2</label>
    </interactant>
    <organismsDiffer>false</organismsDiffer>
    <experiments>3</experiments>
</comment>
<comment type="interaction">
    <interactant intactId="EBI-359498">
        <id>P0DPB6</id>
    </interactant>
    <interactant intactId="EBI-1055079">
        <id>O15160</id>
        <label>POLR1C</label>
    </interactant>
    <organismsDiffer>false</organismsDiffer>
    <experiments>19</experiments>
</comment>
<comment type="interaction">
    <interactant intactId="EBI-359498">
        <id>P0DPB6</id>
    </interactant>
    <interactant intactId="EBI-286642">
        <id>P62826</id>
        <label>RAN</label>
    </interactant>
    <organismsDiffer>false</organismsDiffer>
    <experiments>3</experiments>
</comment>
<comment type="interaction">
    <interactant intactId="EBI-359498">
        <id>P0DPB6</id>
    </interactant>
    <interactant intactId="EBI-741480">
        <id>Q9UMX0</id>
        <label>UBQLN1</label>
    </interactant>
    <organismsDiffer>false</organismsDiffer>
    <experiments>3</experiments>
</comment>
<comment type="interaction">
    <interactant intactId="EBI-359498">
        <id>P0DPB6</id>
    </interactant>
    <interactant intactId="EBI-25900580">
        <id>Q9Y649</id>
    </interactant>
    <organismsDiffer>false</organismsDiffer>
    <experiments>3</experiments>
</comment>
<comment type="subcellular location">
    <subcellularLocation>
        <location evidence="5">Nucleus</location>
    </subcellularLocation>
    <subcellularLocation>
        <location evidence="16">Nucleus</location>
        <location evidence="16">Nucleolus</location>
    </subcellularLocation>
</comment>
<comment type="alternative products">
    <event type="alternative splicing"/>
    <isoform>
        <id>P0DPB6-1</id>
        <id>Q9Y2S0-1</id>
        <name>1</name>
        <sequence type="displayed"/>
    </isoform>
    <isoform>
        <id>P0DPB5-1</id>
        <name>2</name>
        <sequence type="external"/>
    </isoform>
</comment>
<comment type="disease" evidence="4">
    <disease id="DI-02964">
        <name>Treacher Collins syndrome 2</name>
        <acronym>TCS2</acronym>
        <description>A form of Treacher Collins syndrome, a disorder of craniofacial development. Treacher Collins syndrome is characterized by a combination of bilateral downward slanting of the palpebral fissures, colobomas of the lower eyelids with a paucity of eyelashes medial to the defect, hypoplasia of the facial bones, cleft palate, malformation of the external ears, atresia of the external auditory canals, and bilateral conductive hearing loss.</description>
        <dbReference type="MIM" id="613717"/>
    </disease>
    <text>The disease is caused by variants affecting the gene represented in this entry.</text>
</comment>
<comment type="similarity">
    <text evidence="15">Belongs to the archaeal Rpo11/eukaryotic RPB11/RPC19 RNA polymerase subunit family.</text>
</comment>
<comment type="caution">
    <text evidence="15">Contrary to isoform 2, isoform 1 contains an RNA polymerase domain and has DNA-dependent RNA polymerase function. Synteny studies in vertebrates suggest that this isoform has been created by a mammalian-specific retrotransposition event of an ancestral gene which has been lost later on in this lineage.</text>
</comment>
<proteinExistence type="evidence at protein level"/>
<feature type="chain" id="PRO_0000149316" description="DNA-directed RNA polymerases I and III subunit RPAC2">
    <location>
        <begin position="1"/>
        <end position="133"/>
    </location>
</feature>
<feature type="modified residue" description="N-acetylmethionine" evidence="14 18 19 20">
    <location>
        <position position="1"/>
    </location>
</feature>
<feature type="sequence variant" id="VAR_064892" description="In TCS2; dbSNP:rs767196650." evidence="4">
    <original>E</original>
    <variation>K</variation>
    <location>
        <position position="47"/>
    </location>
</feature>
<feature type="sequence variant" id="VAR_064893" description="In TCS2." evidence="4">
    <original>T</original>
    <variation>I</variation>
    <location>
        <position position="50"/>
    </location>
</feature>
<feature type="sequence variant" id="VAR_064894" description="In TCS2; dbSNP:rs1593275448." evidence="4">
    <original>L</original>
    <variation>R</variation>
    <location>
        <position position="51"/>
    </location>
</feature>
<feature type="sequence variant" id="VAR_064895" description="In TCS2." evidence="4">
    <original>G</original>
    <variation>E</variation>
    <location>
        <position position="52"/>
    </location>
</feature>
<feature type="sequence variant" id="VAR_064896" description="In TCS2; dbSNP:rs1014369151." evidence="4">
    <original>R</original>
    <variation>C</variation>
    <location>
        <position position="56"/>
    </location>
</feature>
<feature type="sequence variant" id="VAR_064897" description="In TCS2." evidence="4">
    <original>L</original>
    <variation>S</variation>
    <location>
        <position position="82"/>
    </location>
</feature>
<feature type="sequence variant" id="VAR_064898" description="In TCS2." evidence="4">
    <original>G</original>
    <variation>S</variation>
    <location>
        <position position="99"/>
    </location>
</feature>
<feature type="strand" evidence="22">
    <location>
        <begin position="27"/>
        <end position="31"/>
    </location>
</feature>
<feature type="strand" evidence="22">
    <location>
        <begin position="33"/>
        <end position="35"/>
    </location>
</feature>
<feature type="strand" evidence="22">
    <location>
        <begin position="37"/>
        <end position="46"/>
    </location>
</feature>
<feature type="helix" evidence="22">
    <location>
        <begin position="49"/>
        <end position="59"/>
    </location>
</feature>
<feature type="strand" evidence="22">
    <location>
        <begin position="65"/>
        <end position="72"/>
    </location>
</feature>
<feature type="strand" evidence="21">
    <location>
        <begin position="75"/>
        <end position="77"/>
    </location>
</feature>
<feature type="strand" evidence="22">
    <location>
        <begin position="79"/>
        <end position="90"/>
    </location>
</feature>
<feature type="helix" evidence="22">
    <location>
        <begin position="94"/>
        <end position="128"/>
    </location>
</feature>